<comment type="function">
    <text evidence="6 7">Adrenomedullin/ADM and proadrenomedullin N-20 terminal peptide/PAMP are peptide hormones that act as potent hypotensive and vasodilatator agents (PubMed:8387282, PubMed:9620797). Numerous actions have been reported most related to the physiologic control of fluid and electrolyte homeostasis. In the kidney, ADM is diuretic and natriuretic, and both ADM and PAMP inhibit aldosterone secretion by direct adrenal actions. In pituitary gland, both peptides at physiologically relevant doses inhibit basal ACTH secretion. Both peptides appear to act in brain and pituitary gland to facilitate the loss of plasma volume, actions which complement their hypotensive effects in blood vessels.</text>
</comment>
<comment type="function">
    <molecule>Adrenomedullin</molecule>
    <text evidence="5 7">ADM function is mediated by the CALCRL-RAMP2 and CALCRL-RAMP3 receptor complexes with ADM showing the highest potency for the CALCRL-RAMP2 complex.</text>
</comment>
<comment type="subcellular location">
    <subcellularLocation>
        <location evidence="6">Secreted</location>
    </subcellularLocation>
</comment>
<comment type="tissue specificity">
    <text evidence="6">Highest levels found in pheochromocytoma and adrenal medulla. Also found in lung, ventricle and kidney tissues.</text>
</comment>
<comment type="similarity">
    <text evidence="11">Belongs to the adrenomedullin family.</text>
</comment>
<sequence>MKLVSVALMYLGSLAFLGADTARLDVASEFRKKWNKWALSRGKRELRMSSSYPTGLADVKAGPAQTLIRPQDMKGASRSPEDSSPDAARIRVKRYRQSMNNFQGLRSFGCRFGTCTVQKLAHQIYQFTDKDKDNVAPRSKISPQGYGRRRRRSLPEAGPGRTLVSSKPQAHGAPAPPSGSAPHFL</sequence>
<dbReference type="EMBL" id="D14874">
    <property type="protein sequence ID" value="BAA03589.1"/>
    <property type="molecule type" value="mRNA"/>
</dbReference>
<dbReference type="EMBL" id="S73906">
    <property type="protein sequence ID" value="AAC60642.1"/>
    <property type="molecule type" value="Genomic_DNA"/>
</dbReference>
<dbReference type="EMBL" id="D43639">
    <property type="protein sequence ID" value="BAA07756.1"/>
    <property type="status" value="ALT_SEQ"/>
    <property type="molecule type" value="Genomic_DNA"/>
</dbReference>
<dbReference type="EMBL" id="CR541995">
    <property type="protein sequence ID" value="CAG46792.1"/>
    <property type="molecule type" value="mRNA"/>
</dbReference>
<dbReference type="EMBL" id="BT006902">
    <property type="protein sequence ID" value="AAP35548.1"/>
    <property type="molecule type" value="mRNA"/>
</dbReference>
<dbReference type="EMBL" id="AK312893">
    <property type="protein sequence ID" value="BAG35740.1"/>
    <property type="molecule type" value="mRNA"/>
</dbReference>
<dbReference type="EMBL" id="DQ143945">
    <property type="protein sequence ID" value="AAZ38717.1"/>
    <property type="molecule type" value="Genomic_DNA"/>
</dbReference>
<dbReference type="EMBL" id="CH471064">
    <property type="protein sequence ID" value="EAW68571.1"/>
    <property type="molecule type" value="Genomic_DNA"/>
</dbReference>
<dbReference type="EMBL" id="CH471064">
    <property type="protein sequence ID" value="EAW68572.1"/>
    <property type="molecule type" value="Genomic_DNA"/>
</dbReference>
<dbReference type="EMBL" id="BC015961">
    <property type="protein sequence ID" value="AAH15961.1"/>
    <property type="molecule type" value="mRNA"/>
</dbReference>
<dbReference type="CCDS" id="CCDS7801.1"/>
<dbReference type="PIR" id="JC2351">
    <property type="entry name" value="JN0684"/>
</dbReference>
<dbReference type="RefSeq" id="NP_001115.1">
    <property type="nucleotide sequence ID" value="NM_001124.3"/>
</dbReference>
<dbReference type="PDB" id="2FLY">
    <property type="method" value="NMR"/>
    <property type="chains" value="A=22-41"/>
</dbReference>
<dbReference type="PDB" id="2L7S">
    <property type="method" value="NMR"/>
    <property type="chains" value="A=95-146"/>
</dbReference>
<dbReference type="PDB" id="4RWF">
    <property type="method" value="X-ray"/>
    <property type="resolution" value="1.76 A"/>
    <property type="chains" value="B=119-146"/>
</dbReference>
<dbReference type="PDB" id="5V6Y">
    <property type="method" value="X-ray"/>
    <property type="resolution" value="2.80 A"/>
    <property type="chains" value="E/F/G/H=131-146"/>
</dbReference>
<dbReference type="PDB" id="6UUN">
    <property type="method" value="EM"/>
    <property type="resolution" value="3.00 A"/>
    <property type="chains" value="P=95-146"/>
</dbReference>
<dbReference type="PDB" id="6UUS">
    <property type="method" value="EM"/>
    <property type="resolution" value="2.40 A"/>
    <property type="chains" value="P=95-146"/>
</dbReference>
<dbReference type="PDB" id="6V2E">
    <property type="method" value="X-ray"/>
    <property type="resolution" value="1.83 A"/>
    <property type="chains" value="B=131-146"/>
</dbReference>
<dbReference type="PDB" id="7VV0">
    <property type="method" value="EM"/>
    <property type="resolution" value="3.50 A"/>
    <property type="chains" value="L=30-41"/>
</dbReference>
<dbReference type="PDBsum" id="2FLY"/>
<dbReference type="PDBsum" id="2L7S"/>
<dbReference type="PDBsum" id="4RWF"/>
<dbReference type="PDBsum" id="5V6Y"/>
<dbReference type="PDBsum" id="6UUN"/>
<dbReference type="PDBsum" id="6UUS"/>
<dbReference type="PDBsum" id="6V2E"/>
<dbReference type="PDBsum" id="7VV0"/>
<dbReference type="EMDB" id="EMD-20883"/>
<dbReference type="EMDB" id="EMD-20901"/>
<dbReference type="EMDB" id="EMD-32133"/>
<dbReference type="SMR" id="P35318"/>
<dbReference type="BioGRID" id="106645">
    <property type="interactions" value="6"/>
</dbReference>
<dbReference type="FunCoup" id="P35318">
    <property type="interactions" value="631"/>
</dbReference>
<dbReference type="IntAct" id="P35318">
    <property type="interactions" value="2"/>
</dbReference>
<dbReference type="STRING" id="9606.ENSP00000436607"/>
<dbReference type="ChEMBL" id="CHEMBL2062356"/>
<dbReference type="GlyGen" id="P35318">
    <property type="glycosylation" value="13 sites, 2 O-linked glycans (12 sites)"/>
</dbReference>
<dbReference type="iPTMnet" id="P35318"/>
<dbReference type="PhosphoSitePlus" id="P35318"/>
<dbReference type="BioMuta" id="ADM"/>
<dbReference type="DMDM" id="461474"/>
<dbReference type="MassIVE" id="P35318"/>
<dbReference type="PaxDb" id="9606-ENSP00000436607"/>
<dbReference type="PeptideAtlas" id="P35318"/>
<dbReference type="ProteomicsDB" id="55021"/>
<dbReference type="Antibodypedia" id="4233">
    <property type="antibodies" value="629 antibodies from 36 providers"/>
</dbReference>
<dbReference type="DNASU" id="133"/>
<dbReference type="Ensembl" id="ENST00000278175.10">
    <property type="protein sequence ID" value="ENSP00000278175.5"/>
    <property type="gene ID" value="ENSG00000148926.10"/>
</dbReference>
<dbReference type="Ensembl" id="ENST00000525063.2">
    <property type="protein sequence ID" value="ENSP00000435124.1"/>
    <property type="gene ID" value="ENSG00000148926.10"/>
</dbReference>
<dbReference type="Ensembl" id="ENST00000528655.5">
    <property type="protein sequence ID" value="ENSP00000436607.1"/>
    <property type="gene ID" value="ENSG00000148926.10"/>
</dbReference>
<dbReference type="GeneID" id="133"/>
<dbReference type="KEGG" id="hsa:133"/>
<dbReference type="MANE-Select" id="ENST00000278175.10">
    <property type="protein sequence ID" value="ENSP00000278175.5"/>
    <property type="RefSeq nucleotide sequence ID" value="NM_001124.3"/>
    <property type="RefSeq protein sequence ID" value="NP_001115.1"/>
</dbReference>
<dbReference type="UCSC" id="uc001mil.2">
    <property type="organism name" value="human"/>
</dbReference>
<dbReference type="AGR" id="HGNC:259"/>
<dbReference type="CTD" id="133"/>
<dbReference type="DisGeNET" id="133"/>
<dbReference type="GeneCards" id="ADM"/>
<dbReference type="HGNC" id="HGNC:259">
    <property type="gene designation" value="ADM"/>
</dbReference>
<dbReference type="HPA" id="ENSG00000148926">
    <property type="expression patterns" value="Tissue enhanced (adipose)"/>
</dbReference>
<dbReference type="MIM" id="103275">
    <property type="type" value="gene"/>
</dbReference>
<dbReference type="neXtProt" id="NX_P35318"/>
<dbReference type="OpenTargets" id="ENSG00000148926"/>
<dbReference type="PharmGKB" id="PA24580"/>
<dbReference type="VEuPathDB" id="HostDB:ENSG00000148926"/>
<dbReference type="eggNOG" id="ENOG502S4SF">
    <property type="taxonomic scope" value="Eukaryota"/>
</dbReference>
<dbReference type="GeneTree" id="ENSGT00940000154380"/>
<dbReference type="HOGENOM" id="CLU_099291_1_0_1"/>
<dbReference type="InParanoid" id="P35318"/>
<dbReference type="OMA" id="QSFLYCC"/>
<dbReference type="OrthoDB" id="8771893at2759"/>
<dbReference type="PAN-GO" id="P35318">
    <property type="GO annotations" value="6 GO annotations based on evolutionary models"/>
</dbReference>
<dbReference type="PhylomeDB" id="P35318"/>
<dbReference type="TreeFam" id="TF333447"/>
<dbReference type="PathwayCommons" id="P35318"/>
<dbReference type="Reactome" id="R-HSA-418555">
    <property type="pathway name" value="G alpha (s) signalling events"/>
</dbReference>
<dbReference type="Reactome" id="R-HSA-419812">
    <property type="pathway name" value="Calcitonin-like ligand receptors"/>
</dbReference>
<dbReference type="Reactome" id="R-HSA-9856530">
    <property type="pathway name" value="High laminar flow shear stress activates signaling by PIEZO1 and PECAM1:CDH5:KDR in endothelial cells"/>
</dbReference>
<dbReference type="SignaLink" id="P35318"/>
<dbReference type="SIGNOR" id="P35318"/>
<dbReference type="BioGRID-ORCS" id="133">
    <property type="hits" value="16 hits in 1152 CRISPR screens"/>
</dbReference>
<dbReference type="ChiTaRS" id="ADM">
    <property type="organism name" value="human"/>
</dbReference>
<dbReference type="EvolutionaryTrace" id="P35318"/>
<dbReference type="GeneWiki" id="Adrenomedullin"/>
<dbReference type="GenomeRNAi" id="133"/>
<dbReference type="Pharos" id="P35318">
    <property type="development level" value="Tbio"/>
</dbReference>
<dbReference type="PRO" id="PR:P35318"/>
<dbReference type="Proteomes" id="UP000005640">
    <property type="component" value="Chromosome 11"/>
</dbReference>
<dbReference type="RNAct" id="P35318">
    <property type="molecule type" value="protein"/>
</dbReference>
<dbReference type="Bgee" id="ENSG00000148926">
    <property type="expression patterns" value="Expressed in vena cava and 195 other cell types or tissues"/>
</dbReference>
<dbReference type="ExpressionAtlas" id="P35318">
    <property type="expression patterns" value="baseline and differential"/>
</dbReference>
<dbReference type="GO" id="GO:0005737">
    <property type="term" value="C:cytoplasm"/>
    <property type="evidence" value="ECO:0000314"/>
    <property type="project" value="BHF-UCL"/>
</dbReference>
<dbReference type="GO" id="GO:0005576">
    <property type="term" value="C:extracellular region"/>
    <property type="evidence" value="ECO:0000304"/>
    <property type="project" value="Reactome"/>
</dbReference>
<dbReference type="GO" id="GO:0005615">
    <property type="term" value="C:extracellular space"/>
    <property type="evidence" value="ECO:0000314"/>
    <property type="project" value="BHF-UCL"/>
</dbReference>
<dbReference type="GO" id="GO:0034774">
    <property type="term" value="C:secretory granule lumen"/>
    <property type="evidence" value="ECO:0000304"/>
    <property type="project" value="Reactome"/>
</dbReference>
<dbReference type="GO" id="GO:0031700">
    <property type="term" value="F:adrenomedullin receptor binding"/>
    <property type="evidence" value="ECO:0000314"/>
    <property type="project" value="UniProtKB"/>
</dbReference>
<dbReference type="GO" id="GO:0005179">
    <property type="term" value="F:hormone activity"/>
    <property type="evidence" value="ECO:0000314"/>
    <property type="project" value="UniProt"/>
</dbReference>
<dbReference type="GO" id="GO:0005102">
    <property type="term" value="F:signaling receptor binding"/>
    <property type="evidence" value="ECO:0000304"/>
    <property type="project" value="ProtInc"/>
</dbReference>
<dbReference type="GO" id="GO:0007189">
    <property type="term" value="P:adenylate cyclase-activating G protein-coupled receptor signaling pathway"/>
    <property type="evidence" value="ECO:0000314"/>
    <property type="project" value="UniProtKB"/>
</dbReference>
<dbReference type="GO" id="GO:1990410">
    <property type="term" value="P:adrenomedullin receptor signaling pathway"/>
    <property type="evidence" value="ECO:0000314"/>
    <property type="project" value="UniProtKB"/>
</dbReference>
<dbReference type="GO" id="GO:0060670">
    <property type="term" value="P:branching involved in labyrinthine layer morphogenesis"/>
    <property type="evidence" value="ECO:0007669"/>
    <property type="project" value="Ensembl"/>
</dbReference>
<dbReference type="GO" id="GO:0008283">
    <property type="term" value="P:cell population proliferation"/>
    <property type="evidence" value="ECO:0007669"/>
    <property type="project" value="Ensembl"/>
</dbReference>
<dbReference type="GO" id="GO:0048589">
    <property type="term" value="P:developmental growth"/>
    <property type="evidence" value="ECO:0007669"/>
    <property type="project" value="Ensembl"/>
</dbReference>
<dbReference type="GO" id="GO:0002031">
    <property type="term" value="P:G protein-coupled receptor internalization"/>
    <property type="evidence" value="ECO:0000314"/>
    <property type="project" value="UniProtKB"/>
</dbReference>
<dbReference type="GO" id="GO:0007507">
    <property type="term" value="P:heart development"/>
    <property type="evidence" value="ECO:0007669"/>
    <property type="project" value="Ensembl"/>
</dbReference>
<dbReference type="GO" id="GO:0006954">
    <property type="term" value="P:inflammatory response"/>
    <property type="evidence" value="ECO:0000304"/>
    <property type="project" value="GO_Central"/>
</dbReference>
<dbReference type="GO" id="GO:0043116">
    <property type="term" value="P:negative regulation of vascular permeability"/>
    <property type="evidence" value="ECO:0007669"/>
    <property type="project" value="Ensembl"/>
</dbReference>
<dbReference type="GO" id="GO:0045906">
    <property type="term" value="P:negative regulation of vasoconstriction"/>
    <property type="evidence" value="ECO:0000314"/>
    <property type="project" value="BHF-UCL"/>
</dbReference>
<dbReference type="GO" id="GO:0001843">
    <property type="term" value="P:neural tube closure"/>
    <property type="evidence" value="ECO:0007669"/>
    <property type="project" value="Ensembl"/>
</dbReference>
<dbReference type="GO" id="GO:0045766">
    <property type="term" value="P:positive regulation of angiogenesis"/>
    <property type="evidence" value="ECO:0007669"/>
    <property type="project" value="Ensembl"/>
</dbReference>
<dbReference type="GO" id="GO:0008284">
    <property type="term" value="P:positive regulation of cell population proliferation"/>
    <property type="evidence" value="ECO:0007669"/>
    <property type="project" value="Ensembl"/>
</dbReference>
<dbReference type="GO" id="GO:0010460">
    <property type="term" value="P:positive regulation of heart rate"/>
    <property type="evidence" value="ECO:0000314"/>
    <property type="project" value="UniProtKB"/>
</dbReference>
<dbReference type="GO" id="GO:2000184">
    <property type="term" value="P:positive regulation of progesterone biosynthetic process"/>
    <property type="evidence" value="ECO:0000304"/>
    <property type="project" value="GO_Central"/>
</dbReference>
<dbReference type="GO" id="GO:2001214">
    <property type="term" value="P:positive regulation of vasculogenesis"/>
    <property type="evidence" value="ECO:0007669"/>
    <property type="project" value="Ensembl"/>
</dbReference>
<dbReference type="GO" id="GO:0031623">
    <property type="term" value="P:receptor internalization"/>
    <property type="evidence" value="ECO:0000314"/>
    <property type="project" value="UniProtKB"/>
</dbReference>
<dbReference type="GO" id="GO:0003073">
    <property type="term" value="P:regulation of systemic arterial blood pressure"/>
    <property type="evidence" value="ECO:0000314"/>
    <property type="project" value="UniProtKB"/>
</dbReference>
<dbReference type="GO" id="GO:0035809">
    <property type="term" value="P:regulation of urine volume"/>
    <property type="evidence" value="ECO:0000314"/>
    <property type="project" value="UniProtKB"/>
</dbReference>
<dbReference type="GO" id="GO:0007165">
    <property type="term" value="P:signal transduction"/>
    <property type="evidence" value="ECO:0000304"/>
    <property type="project" value="ProtInc"/>
</dbReference>
<dbReference type="GO" id="GO:0097084">
    <property type="term" value="P:vascular associated smooth muscle cell development"/>
    <property type="evidence" value="ECO:0007669"/>
    <property type="project" value="Ensembl"/>
</dbReference>
<dbReference type="GO" id="GO:0001570">
    <property type="term" value="P:vasculogenesis"/>
    <property type="evidence" value="ECO:0000314"/>
    <property type="project" value="UniProtKB"/>
</dbReference>
<dbReference type="InterPro" id="IPR051665">
    <property type="entry name" value="Adrenomedullin-reg_peptide"/>
</dbReference>
<dbReference type="InterPro" id="IPR021116">
    <property type="entry name" value="Calcitonin/adrenomedullin"/>
</dbReference>
<dbReference type="InterPro" id="IPR001710">
    <property type="entry name" value="Pro-ADM"/>
</dbReference>
<dbReference type="PANTHER" id="PTHR23414">
    <property type="entry name" value="ADRENOMEDULLIN, ADM"/>
    <property type="match status" value="1"/>
</dbReference>
<dbReference type="PANTHER" id="PTHR23414:SF3">
    <property type="entry name" value="PRO-ADRENOMEDULLIN"/>
    <property type="match status" value="1"/>
</dbReference>
<dbReference type="Pfam" id="PF00214">
    <property type="entry name" value="Calc_CGRP_IAPP"/>
    <property type="match status" value="1"/>
</dbReference>
<dbReference type="PRINTS" id="PR00801">
    <property type="entry name" value="ADRENOMEDULN"/>
</dbReference>
<organism>
    <name type="scientific">Homo sapiens</name>
    <name type="common">Human</name>
    <dbReference type="NCBI Taxonomy" id="9606"/>
    <lineage>
        <taxon>Eukaryota</taxon>
        <taxon>Metazoa</taxon>
        <taxon>Chordata</taxon>
        <taxon>Craniata</taxon>
        <taxon>Vertebrata</taxon>
        <taxon>Euteleostomi</taxon>
        <taxon>Mammalia</taxon>
        <taxon>Eutheria</taxon>
        <taxon>Euarchontoglires</taxon>
        <taxon>Primates</taxon>
        <taxon>Haplorrhini</taxon>
        <taxon>Catarrhini</taxon>
        <taxon>Hominidae</taxon>
        <taxon>Homo</taxon>
    </lineage>
</organism>
<name>ADML_HUMAN</name>
<reference key="1">
    <citation type="journal article" date="1993" name="Biochem. Biophys. Res. Commun.">
        <title>Cloning and characterization of cDNA encoding a precursor for human adrenomedullin.</title>
        <authorList>
            <person name="Kitamura K."/>
            <person name="Sakata J."/>
            <person name="Kangawa K."/>
            <person name="Kojima M."/>
            <person name="Matsuo H."/>
            <person name="Eto T."/>
        </authorList>
    </citation>
    <scope>NUCLEOTIDE SEQUENCE [MRNA]</scope>
    <source>
        <tissue>Pheochromocytoma</tissue>
    </source>
</reference>
<reference key="2">
    <citation type="journal article" date="1994" name="Biochem. Biophys. Res. Commun.">
        <title>Genomic structure of human adrenomedullin gene.</title>
        <authorList>
            <person name="Ishimitsu T."/>
            <person name="Kojima M."/>
            <person name="Kangawa K."/>
            <person name="Hino J."/>
            <person name="Matsuoka H."/>
            <person name="Kitamura K."/>
            <person name="Eto T."/>
            <person name="Matsuo H."/>
        </authorList>
    </citation>
    <scope>NUCLEOTIDE SEQUENCE [GENOMIC DNA]</scope>
    <source>
        <tissue>Liver</tissue>
    </source>
</reference>
<reference key="3">
    <citation type="submission" date="2003-05" db="EMBL/GenBank/DDBJ databases">
        <title>Cloning of human full-length CDSs in BD Creator(TM) system donor vector.</title>
        <authorList>
            <person name="Kalnine N."/>
            <person name="Chen X."/>
            <person name="Rolfs A."/>
            <person name="Halleck A."/>
            <person name="Hines L."/>
            <person name="Eisenstein S."/>
            <person name="Koundinya M."/>
            <person name="Raphael J."/>
            <person name="Moreira D."/>
            <person name="Kelley T."/>
            <person name="LaBaer J."/>
            <person name="Lin Y."/>
            <person name="Phelan M."/>
            <person name="Farmer A."/>
        </authorList>
    </citation>
    <scope>NUCLEOTIDE SEQUENCE [LARGE SCALE MRNA]</scope>
</reference>
<reference key="4">
    <citation type="submission" date="2004-06" db="EMBL/GenBank/DDBJ databases">
        <title>Cloning of human full open reading frames in Gateway(TM) system entry vector (pDONR201).</title>
        <authorList>
            <person name="Halleck A."/>
            <person name="Ebert L."/>
            <person name="Mkoundinya M."/>
            <person name="Schick M."/>
            <person name="Eisenstein S."/>
            <person name="Neubert P."/>
            <person name="Kstrang K."/>
            <person name="Schatten R."/>
            <person name="Shen B."/>
            <person name="Henze S."/>
            <person name="Mar W."/>
            <person name="Korn B."/>
            <person name="Zuo D."/>
            <person name="Hu Y."/>
            <person name="LaBaer J."/>
        </authorList>
    </citation>
    <scope>NUCLEOTIDE SEQUENCE [LARGE SCALE MRNA]</scope>
</reference>
<reference key="5">
    <citation type="journal article" date="2004" name="Nat. Genet.">
        <title>Complete sequencing and characterization of 21,243 full-length human cDNAs.</title>
        <authorList>
            <person name="Ota T."/>
            <person name="Suzuki Y."/>
            <person name="Nishikawa T."/>
            <person name="Otsuki T."/>
            <person name="Sugiyama T."/>
            <person name="Irie R."/>
            <person name="Wakamatsu A."/>
            <person name="Hayashi K."/>
            <person name="Sato H."/>
            <person name="Nagai K."/>
            <person name="Kimura K."/>
            <person name="Makita H."/>
            <person name="Sekine M."/>
            <person name="Obayashi M."/>
            <person name="Nishi T."/>
            <person name="Shibahara T."/>
            <person name="Tanaka T."/>
            <person name="Ishii S."/>
            <person name="Yamamoto J."/>
            <person name="Saito K."/>
            <person name="Kawai Y."/>
            <person name="Isono Y."/>
            <person name="Nakamura Y."/>
            <person name="Nagahari K."/>
            <person name="Murakami K."/>
            <person name="Yasuda T."/>
            <person name="Iwayanagi T."/>
            <person name="Wagatsuma M."/>
            <person name="Shiratori A."/>
            <person name="Sudo H."/>
            <person name="Hosoiri T."/>
            <person name="Kaku Y."/>
            <person name="Kodaira H."/>
            <person name="Kondo H."/>
            <person name="Sugawara M."/>
            <person name="Takahashi M."/>
            <person name="Kanda K."/>
            <person name="Yokoi T."/>
            <person name="Furuya T."/>
            <person name="Kikkawa E."/>
            <person name="Omura Y."/>
            <person name="Abe K."/>
            <person name="Kamihara K."/>
            <person name="Katsuta N."/>
            <person name="Sato K."/>
            <person name="Tanikawa M."/>
            <person name="Yamazaki M."/>
            <person name="Ninomiya K."/>
            <person name="Ishibashi T."/>
            <person name="Yamashita H."/>
            <person name="Murakawa K."/>
            <person name="Fujimori K."/>
            <person name="Tanai H."/>
            <person name="Kimata M."/>
            <person name="Watanabe M."/>
            <person name="Hiraoka S."/>
            <person name="Chiba Y."/>
            <person name="Ishida S."/>
            <person name="Ono Y."/>
            <person name="Takiguchi S."/>
            <person name="Watanabe S."/>
            <person name="Yosida M."/>
            <person name="Hotuta T."/>
            <person name="Kusano J."/>
            <person name="Kanehori K."/>
            <person name="Takahashi-Fujii A."/>
            <person name="Hara H."/>
            <person name="Tanase T.-O."/>
            <person name="Nomura Y."/>
            <person name="Togiya S."/>
            <person name="Komai F."/>
            <person name="Hara R."/>
            <person name="Takeuchi K."/>
            <person name="Arita M."/>
            <person name="Imose N."/>
            <person name="Musashino K."/>
            <person name="Yuuki H."/>
            <person name="Oshima A."/>
            <person name="Sasaki N."/>
            <person name="Aotsuka S."/>
            <person name="Yoshikawa Y."/>
            <person name="Matsunawa H."/>
            <person name="Ichihara T."/>
            <person name="Shiohata N."/>
            <person name="Sano S."/>
            <person name="Moriya S."/>
            <person name="Momiyama H."/>
            <person name="Satoh N."/>
            <person name="Takami S."/>
            <person name="Terashima Y."/>
            <person name="Suzuki O."/>
            <person name="Nakagawa S."/>
            <person name="Senoh A."/>
            <person name="Mizoguchi H."/>
            <person name="Goto Y."/>
            <person name="Shimizu F."/>
            <person name="Wakebe H."/>
            <person name="Hishigaki H."/>
            <person name="Watanabe T."/>
            <person name="Sugiyama A."/>
            <person name="Takemoto M."/>
            <person name="Kawakami B."/>
            <person name="Yamazaki M."/>
            <person name="Watanabe K."/>
            <person name="Kumagai A."/>
            <person name="Itakura S."/>
            <person name="Fukuzumi Y."/>
            <person name="Fujimori Y."/>
            <person name="Komiyama M."/>
            <person name="Tashiro H."/>
            <person name="Tanigami A."/>
            <person name="Fujiwara T."/>
            <person name="Ono T."/>
            <person name="Yamada K."/>
            <person name="Fujii Y."/>
            <person name="Ozaki K."/>
            <person name="Hirao M."/>
            <person name="Ohmori Y."/>
            <person name="Kawabata A."/>
            <person name="Hikiji T."/>
            <person name="Kobatake N."/>
            <person name="Inagaki H."/>
            <person name="Ikema Y."/>
            <person name="Okamoto S."/>
            <person name="Okitani R."/>
            <person name="Kawakami T."/>
            <person name="Noguchi S."/>
            <person name="Itoh T."/>
            <person name="Shigeta K."/>
            <person name="Senba T."/>
            <person name="Matsumura K."/>
            <person name="Nakajima Y."/>
            <person name="Mizuno T."/>
            <person name="Morinaga M."/>
            <person name="Sasaki M."/>
            <person name="Togashi T."/>
            <person name="Oyama M."/>
            <person name="Hata H."/>
            <person name="Watanabe M."/>
            <person name="Komatsu T."/>
            <person name="Mizushima-Sugano J."/>
            <person name="Satoh T."/>
            <person name="Shirai Y."/>
            <person name="Takahashi Y."/>
            <person name="Nakagawa K."/>
            <person name="Okumura K."/>
            <person name="Nagase T."/>
            <person name="Nomura N."/>
            <person name="Kikuchi H."/>
            <person name="Masuho Y."/>
            <person name="Yamashita R."/>
            <person name="Nakai K."/>
            <person name="Yada T."/>
            <person name="Nakamura Y."/>
            <person name="Ohara O."/>
            <person name="Isogai T."/>
            <person name="Sugano S."/>
        </authorList>
    </citation>
    <scope>NUCLEOTIDE SEQUENCE [LARGE SCALE MRNA]</scope>
    <source>
        <tissue>Brain cortex</tissue>
    </source>
</reference>
<reference key="6">
    <citation type="submission" date="2005-07" db="EMBL/GenBank/DDBJ databases">
        <authorList>
            <consortium name="NIEHS SNPs program"/>
        </authorList>
    </citation>
    <scope>NUCLEOTIDE SEQUENCE [GENOMIC DNA]</scope>
    <scope>VARIANT ARG-50</scope>
</reference>
<reference key="7">
    <citation type="submission" date="2005-09" db="EMBL/GenBank/DDBJ databases">
        <authorList>
            <person name="Mural R.J."/>
            <person name="Istrail S."/>
            <person name="Sutton G.G."/>
            <person name="Florea L."/>
            <person name="Halpern A.L."/>
            <person name="Mobarry C.M."/>
            <person name="Lippert R."/>
            <person name="Walenz B."/>
            <person name="Shatkay H."/>
            <person name="Dew I."/>
            <person name="Miller J.R."/>
            <person name="Flanigan M.J."/>
            <person name="Edwards N.J."/>
            <person name="Bolanos R."/>
            <person name="Fasulo D."/>
            <person name="Halldorsson B.V."/>
            <person name="Hannenhalli S."/>
            <person name="Turner R."/>
            <person name="Yooseph S."/>
            <person name="Lu F."/>
            <person name="Nusskern D.R."/>
            <person name="Shue B.C."/>
            <person name="Zheng X.H."/>
            <person name="Zhong F."/>
            <person name="Delcher A.L."/>
            <person name="Huson D.H."/>
            <person name="Kravitz S.A."/>
            <person name="Mouchard L."/>
            <person name="Reinert K."/>
            <person name="Remington K.A."/>
            <person name="Clark A.G."/>
            <person name="Waterman M.S."/>
            <person name="Eichler E.E."/>
            <person name="Adams M.D."/>
            <person name="Hunkapiller M.W."/>
            <person name="Myers E.W."/>
            <person name="Venter J.C."/>
        </authorList>
    </citation>
    <scope>NUCLEOTIDE SEQUENCE [LARGE SCALE GENOMIC DNA]</scope>
</reference>
<reference key="8">
    <citation type="journal article" date="2004" name="Genome Res.">
        <title>The status, quality, and expansion of the NIH full-length cDNA project: the Mammalian Gene Collection (MGC).</title>
        <authorList>
            <consortium name="The MGC Project Team"/>
        </authorList>
    </citation>
    <scope>NUCLEOTIDE SEQUENCE [LARGE SCALE MRNA]</scope>
    <source>
        <tissue>Kidney</tissue>
    </source>
</reference>
<reference key="9">
    <citation type="journal article" date="1993" name="Biochem. Biophys. Res. Commun.">
        <title>Adrenomedullin: a novel hypotensive peptide isolated from human pheochromocytoma.</title>
        <authorList>
            <person name="Kitamura K."/>
            <person name="Kangawa K."/>
            <person name="Kawamoto M."/>
            <person name="Ichiki Y."/>
            <person name="Nakamura S."/>
            <person name="Matsuo H."/>
            <person name="Eto T."/>
        </authorList>
    </citation>
    <scope>PROTEIN SEQUENCE OF 95-146</scope>
    <scope>AMIDATION AT TYR-146</scope>
    <scope>DISULFIDE BOND</scope>
    <scope>FUNCTION</scope>
    <scope>SUBCELLULAR LOCATION</scope>
    <scope>TISSUE SPECIFICITY</scope>
    <source>
        <tissue>Pheochromocytoma</tissue>
    </source>
</reference>
<reference key="10">
    <citation type="journal article" date="1998" name="Nature">
        <title>RAMPs regulate the transport and ligand specificity of the calcitonin-receptor-like receptor.</title>
        <authorList>
            <person name="McLatchie L.M."/>
            <person name="Fraser N.J."/>
            <person name="Main M.J."/>
            <person name="Wise A."/>
            <person name="Brown J."/>
            <person name="Thompson N."/>
            <person name="Solari R."/>
            <person name="Lee M.G."/>
            <person name="Foord S.M."/>
        </authorList>
    </citation>
    <scope>FUNCTION</scope>
    <source>
        <tissue>Neuroblastoma</tissue>
    </source>
</reference>
<reference key="11">
    <citation type="journal article" date="1998" name="Front. Neuroendocrinol.">
        <title>Proadrenomedullin-derived peptides.</title>
        <authorList>
            <person name="Samson W.K."/>
        </authorList>
    </citation>
    <scope>REVIEW</scope>
</reference>
<reference key="12">
    <citation type="journal article" date="1999" name="Regul. Pept.">
        <title>Structure-activity relationships of adrenomedullin in the circulation and adrenal gland.</title>
        <authorList>
            <person name="Champion H.C."/>
            <person name="Nussdorfer G.G."/>
            <person name="Kadowitz P.J."/>
        </authorList>
    </citation>
    <scope>REVIEW</scope>
</reference>
<reference key="13">
    <citation type="journal article" date="2006" name="Biopolymers">
        <title>NMR conformational analysis of proadrenomedullin N-terminal 20 peptide, a proangiogenic factor involved in tumor growth.</title>
        <authorList>
            <person name="Lucyk S."/>
            <person name="Taha H."/>
            <person name="Yamamoto H."/>
            <person name="Miskolzie M."/>
            <person name="Kotovych G."/>
        </authorList>
    </citation>
    <scope>STRUCTURE BY NMR OF 22-41</scope>
    <scope>AMIDATION AT ARG-41</scope>
</reference>
<reference evidence="13 14" key="14">
    <citation type="journal article" date="2020" name="ACS Pharmacol. Transl. Sci.">
        <title>Structure and Dynamics of Adrenomedullin Receptors AM1 and AM2 Reveal Key Mechanisms in the Control of Receptor Phenotype by Receptor Activity-Modifying Proteins.</title>
        <authorList>
            <person name="Liang Y.L."/>
            <person name="Belousoff M.J."/>
            <person name="Fletcher M.M."/>
            <person name="Zhang X."/>
            <person name="Khoshouei M."/>
            <person name="Deganutti G."/>
            <person name="Koole C."/>
            <person name="Furness S.G.B."/>
            <person name="Miller L.J."/>
            <person name="Hay D.L."/>
            <person name="Christopoulos A."/>
            <person name="Reynolds C.A."/>
            <person name="Danev R."/>
            <person name="Wootten D."/>
            <person name="Sexton P.M."/>
        </authorList>
    </citation>
    <scope>STRUCTURE BY ELECTRON MICROSCOPY (2.40 ANGSTROMS) OF 95-146 IN COMPLEX WITH CALCRL; RAMP2; RAMP3 AND G PROTEINS</scope>
</reference>
<gene>
    <name evidence="12" type="primary">ADM</name>
    <name type="synonym">AM</name>
</gene>
<keyword id="KW-0002">3D-structure</keyword>
<keyword id="KW-0027">Amidation</keyword>
<keyword id="KW-0165">Cleavage on pair of basic residues</keyword>
<keyword id="KW-0903">Direct protein sequencing</keyword>
<keyword id="KW-1015">Disulfide bond</keyword>
<keyword id="KW-0372">Hormone</keyword>
<keyword id="KW-1267">Proteomics identification</keyword>
<keyword id="KW-1185">Reference proteome</keyword>
<keyword id="KW-0964">Secreted</keyword>
<keyword id="KW-0732">Signal</keyword>
<protein>
    <recommendedName>
        <fullName>Pro-adrenomedullin</fullName>
    </recommendedName>
    <component>
        <recommendedName>
            <fullName evidence="10">Adrenomedullin</fullName>
            <shortName>AM</shortName>
        </recommendedName>
    </component>
    <component>
        <recommendedName>
            <fullName evidence="2">Proadrenomedullin N-20 terminal peptide</fullName>
        </recommendedName>
        <alternativeName>
            <fullName evidence="9">ProAM N-terminal 20 peptide</fullName>
            <shortName evidence="9">PAMP</shortName>
            <shortName>ProAM-N20</shortName>
        </alternativeName>
    </component>
</protein>
<evidence type="ECO:0000250" key="1">
    <source>
        <dbReference type="UniProtKB" id="P43145"/>
    </source>
</evidence>
<evidence type="ECO:0000250" key="2">
    <source>
        <dbReference type="UniProtKB" id="P53366"/>
    </source>
</evidence>
<evidence type="ECO:0000256" key="3">
    <source>
        <dbReference type="SAM" id="MobiDB-lite"/>
    </source>
</evidence>
<evidence type="ECO:0000269" key="4">
    <source>
    </source>
</evidence>
<evidence type="ECO:0000269" key="5">
    <source>
    </source>
</evidence>
<evidence type="ECO:0000269" key="6">
    <source>
    </source>
</evidence>
<evidence type="ECO:0000269" key="7">
    <source>
    </source>
</evidence>
<evidence type="ECO:0000269" key="8">
    <source ref="6"/>
</evidence>
<evidence type="ECO:0000303" key="9">
    <source>
    </source>
</evidence>
<evidence type="ECO:0000303" key="10">
    <source>
    </source>
</evidence>
<evidence type="ECO:0000305" key="11"/>
<evidence type="ECO:0000312" key="12">
    <source>
        <dbReference type="HGNC" id="HGNC:259"/>
    </source>
</evidence>
<evidence type="ECO:0007744" key="13">
    <source>
        <dbReference type="PDB" id="6UUN"/>
    </source>
</evidence>
<evidence type="ECO:0007744" key="14">
    <source>
        <dbReference type="PDB" id="6UUS"/>
    </source>
</evidence>
<evidence type="ECO:0007829" key="15">
    <source>
        <dbReference type="PDB" id="2FLY"/>
    </source>
</evidence>
<evidence type="ECO:0007829" key="16">
    <source>
        <dbReference type="PDB" id="2L7S"/>
    </source>
</evidence>
<evidence type="ECO:0007829" key="17">
    <source>
        <dbReference type="PDB" id="4RWF"/>
    </source>
</evidence>
<evidence type="ECO:0007829" key="18">
    <source>
        <dbReference type="PDB" id="6UUN"/>
    </source>
</evidence>
<evidence type="ECO:0007829" key="19">
    <source>
        <dbReference type="PDB" id="6UUS"/>
    </source>
</evidence>
<accession>P35318</accession>
<accession>B2R793</accession>
<accession>D3DQV3</accession>
<accession>Q6FGW2</accession>
<proteinExistence type="evidence at protein level"/>
<feature type="signal peptide" evidence="2">
    <location>
        <begin position="1"/>
        <end position="21"/>
    </location>
</feature>
<feature type="peptide" id="PRO_0000000961" description="Proadrenomedullin N-20 terminal peptide" evidence="1">
    <location>
        <begin position="22"/>
        <end position="41"/>
    </location>
</feature>
<feature type="propeptide" id="PRO_0000000962" evidence="1">
    <location>
        <begin position="45"/>
        <end position="92"/>
    </location>
</feature>
<feature type="peptide" id="PRO_0000000963" description="Adrenomedullin" evidence="6">
    <location>
        <begin position="95"/>
        <end position="146"/>
    </location>
</feature>
<feature type="propeptide" id="PRO_0000000964" description="PreproAM C-terminal fragment">
    <location>
        <begin position="148"/>
        <end position="185"/>
    </location>
</feature>
<feature type="region of interest" description="Disordered" evidence="3">
    <location>
        <begin position="60"/>
        <end position="87"/>
    </location>
</feature>
<feature type="region of interest" description="Disordered" evidence="3">
    <location>
        <begin position="133"/>
        <end position="185"/>
    </location>
</feature>
<feature type="site" description="Required for CALCRL receptor interaction" evidence="5">
    <location>
        <position position="116"/>
    </location>
</feature>
<feature type="site" description="Required for CALCRL receptor interaction" evidence="5">
    <location>
        <position position="125"/>
    </location>
</feature>
<feature type="modified residue" description="Arginine amide" evidence="4">
    <location>
        <position position="41"/>
    </location>
</feature>
<feature type="modified residue" description="Tyrosine amide" evidence="6">
    <location>
        <position position="146"/>
    </location>
</feature>
<feature type="disulfide bond" evidence="5 6">
    <location>
        <begin position="110"/>
        <end position="115"/>
    </location>
</feature>
<feature type="sequence variant" id="VAR_014861" description="In dbSNP:rs5005." evidence="8">
    <original>S</original>
    <variation>R</variation>
    <location>
        <position position="50"/>
    </location>
</feature>
<feature type="sequence variant" id="VAR_048205" description="In dbSNP:rs2228573.">
    <original>P</original>
    <variation>R</variation>
    <location>
        <position position="85"/>
    </location>
</feature>
<feature type="helix" evidence="15">
    <location>
        <begin position="24"/>
        <end position="40"/>
    </location>
</feature>
<feature type="strand" evidence="16">
    <location>
        <begin position="102"/>
        <end position="107"/>
    </location>
</feature>
<feature type="strand" evidence="18">
    <location>
        <begin position="112"/>
        <end position="114"/>
    </location>
</feature>
<feature type="helix" evidence="19">
    <location>
        <begin position="116"/>
        <end position="126"/>
    </location>
</feature>
<feature type="strand" evidence="17">
    <location>
        <begin position="132"/>
        <end position="135"/>
    </location>
</feature>
<feature type="helix" evidence="17">
    <location>
        <begin position="138"/>
        <end position="141"/>
    </location>
</feature>